<organism>
    <name type="scientific">Arabidopsis thaliana</name>
    <name type="common">Mouse-ear cress</name>
    <dbReference type="NCBI Taxonomy" id="3702"/>
    <lineage>
        <taxon>Eukaryota</taxon>
        <taxon>Viridiplantae</taxon>
        <taxon>Streptophyta</taxon>
        <taxon>Embryophyta</taxon>
        <taxon>Tracheophyta</taxon>
        <taxon>Spermatophyta</taxon>
        <taxon>Magnoliopsida</taxon>
        <taxon>eudicotyledons</taxon>
        <taxon>Gunneridae</taxon>
        <taxon>Pentapetalae</taxon>
        <taxon>rosids</taxon>
        <taxon>malvids</taxon>
        <taxon>Brassicales</taxon>
        <taxon>Brassicaceae</taxon>
        <taxon>Camelineae</taxon>
        <taxon>Arabidopsis</taxon>
    </lineage>
</organism>
<gene>
    <name type="primary">APRR7</name>
    <name type="ordered locus">At5g02810</name>
    <name type="ORF">F9G14_120</name>
</gene>
<evidence type="ECO:0000255" key="1">
    <source>
        <dbReference type="PROSITE-ProRule" id="PRU00169"/>
    </source>
</evidence>
<evidence type="ECO:0000255" key="2">
    <source>
        <dbReference type="PROSITE-ProRule" id="PRU00357"/>
    </source>
</evidence>
<evidence type="ECO:0000256" key="3">
    <source>
        <dbReference type="SAM" id="MobiDB-lite"/>
    </source>
</evidence>
<evidence type="ECO:0000269" key="4">
    <source>
    </source>
</evidence>
<evidence type="ECO:0000269" key="5">
    <source>
    </source>
</evidence>
<evidence type="ECO:0000269" key="6">
    <source>
    </source>
</evidence>
<evidence type="ECO:0000269" key="7">
    <source>
    </source>
</evidence>
<evidence type="ECO:0000269" key="8">
    <source>
    </source>
</evidence>
<evidence type="ECO:0000269" key="9">
    <source>
    </source>
</evidence>
<evidence type="ECO:0000269" key="10">
    <source>
    </source>
</evidence>
<evidence type="ECO:0000269" key="11">
    <source>
    </source>
</evidence>
<evidence type="ECO:0000269" key="12">
    <source>
    </source>
</evidence>
<evidence type="ECO:0000269" key="13">
    <source>
    </source>
</evidence>
<evidence type="ECO:0000305" key="14"/>
<evidence type="ECO:0000305" key="15">
    <source>
    </source>
</evidence>
<evidence type="ECO:0000305" key="16">
    <source>
    </source>
</evidence>
<protein>
    <recommendedName>
        <fullName>Two-component response regulator-like APRR7</fullName>
    </recommendedName>
    <alternativeName>
        <fullName>Pseudo-response regulator 7</fullName>
    </alternativeName>
</protein>
<reference key="1">
    <citation type="journal article" date="2000" name="Plant Cell Physiol.">
        <title>Circadian waves of expression of the APRR1/TOC1 family of pseudo-response regulators in Arabidopsis thaliana: insight into the plant circadian clock.</title>
        <authorList>
            <person name="Matsushika A."/>
            <person name="Makino S."/>
            <person name="Kojima M."/>
            <person name="Mizuno T."/>
        </authorList>
    </citation>
    <scope>NUCLEOTIDE SEQUENCE [MRNA]</scope>
    <scope>FUNCTION</scope>
</reference>
<reference key="2">
    <citation type="journal article" date="2000" name="Nature">
        <title>Sequence and analysis of chromosome 5 of the plant Arabidopsis thaliana.</title>
        <authorList>
            <person name="Tabata S."/>
            <person name="Kaneko T."/>
            <person name="Nakamura Y."/>
            <person name="Kotani H."/>
            <person name="Kato T."/>
            <person name="Asamizu E."/>
            <person name="Miyajima N."/>
            <person name="Sasamoto S."/>
            <person name="Kimura T."/>
            <person name="Hosouchi T."/>
            <person name="Kawashima K."/>
            <person name="Kohara M."/>
            <person name="Matsumoto M."/>
            <person name="Matsuno A."/>
            <person name="Muraki A."/>
            <person name="Nakayama S."/>
            <person name="Nakazaki N."/>
            <person name="Naruo K."/>
            <person name="Okumura S."/>
            <person name="Shinpo S."/>
            <person name="Takeuchi C."/>
            <person name="Wada T."/>
            <person name="Watanabe A."/>
            <person name="Yamada M."/>
            <person name="Yasuda M."/>
            <person name="Sato S."/>
            <person name="de la Bastide M."/>
            <person name="Huang E."/>
            <person name="Spiegel L."/>
            <person name="Gnoj L."/>
            <person name="O'Shaughnessy A."/>
            <person name="Preston R."/>
            <person name="Habermann K."/>
            <person name="Murray J."/>
            <person name="Johnson D."/>
            <person name="Rohlfing T."/>
            <person name="Nelson J."/>
            <person name="Stoneking T."/>
            <person name="Pepin K."/>
            <person name="Spieth J."/>
            <person name="Sekhon M."/>
            <person name="Armstrong J."/>
            <person name="Becker M."/>
            <person name="Belter E."/>
            <person name="Cordum H."/>
            <person name="Cordes M."/>
            <person name="Courtney L."/>
            <person name="Courtney W."/>
            <person name="Dante M."/>
            <person name="Du H."/>
            <person name="Edwards J."/>
            <person name="Fryman J."/>
            <person name="Haakensen B."/>
            <person name="Lamar E."/>
            <person name="Latreille P."/>
            <person name="Leonard S."/>
            <person name="Meyer R."/>
            <person name="Mulvaney E."/>
            <person name="Ozersky P."/>
            <person name="Riley A."/>
            <person name="Strowmatt C."/>
            <person name="Wagner-McPherson C."/>
            <person name="Wollam A."/>
            <person name="Yoakum M."/>
            <person name="Bell M."/>
            <person name="Dedhia N."/>
            <person name="Parnell L."/>
            <person name="Shah R."/>
            <person name="Rodriguez M."/>
            <person name="Hoon See L."/>
            <person name="Vil D."/>
            <person name="Baker J."/>
            <person name="Kirchoff K."/>
            <person name="Toth K."/>
            <person name="King L."/>
            <person name="Bahret A."/>
            <person name="Miller B."/>
            <person name="Marra M.A."/>
            <person name="Martienssen R."/>
            <person name="McCombie W.R."/>
            <person name="Wilson R.K."/>
            <person name="Murphy G."/>
            <person name="Bancroft I."/>
            <person name="Volckaert G."/>
            <person name="Wambutt R."/>
            <person name="Duesterhoeft A."/>
            <person name="Stiekema W."/>
            <person name="Pohl T."/>
            <person name="Entian K.-D."/>
            <person name="Terryn N."/>
            <person name="Hartley N."/>
            <person name="Bent E."/>
            <person name="Johnson S."/>
            <person name="Langham S.-A."/>
            <person name="McCullagh B."/>
            <person name="Robben J."/>
            <person name="Grymonprez B."/>
            <person name="Zimmermann W."/>
            <person name="Ramsperger U."/>
            <person name="Wedler H."/>
            <person name="Balke K."/>
            <person name="Wedler E."/>
            <person name="Peters S."/>
            <person name="van Staveren M."/>
            <person name="Dirkse W."/>
            <person name="Mooijman P."/>
            <person name="Klein Lankhorst R."/>
            <person name="Weitzenegger T."/>
            <person name="Bothe G."/>
            <person name="Rose M."/>
            <person name="Hauf J."/>
            <person name="Berneiser S."/>
            <person name="Hempel S."/>
            <person name="Feldpausch M."/>
            <person name="Lamberth S."/>
            <person name="Villarroel R."/>
            <person name="Gielen J."/>
            <person name="Ardiles W."/>
            <person name="Bents O."/>
            <person name="Lemcke K."/>
            <person name="Kolesov G."/>
            <person name="Mayer K.F.X."/>
            <person name="Rudd S."/>
            <person name="Schoof H."/>
            <person name="Schueller C."/>
            <person name="Zaccaria P."/>
            <person name="Mewes H.-W."/>
            <person name="Bevan M."/>
            <person name="Fransz P.F."/>
        </authorList>
    </citation>
    <scope>NUCLEOTIDE SEQUENCE [LARGE SCALE GENOMIC DNA]</scope>
    <source>
        <strain>cv. Columbia</strain>
    </source>
</reference>
<reference key="3">
    <citation type="journal article" date="2017" name="Plant J.">
        <title>Araport11: a complete reannotation of the Arabidopsis thaliana reference genome.</title>
        <authorList>
            <person name="Cheng C.Y."/>
            <person name="Krishnakumar V."/>
            <person name="Chan A.P."/>
            <person name="Thibaud-Nissen F."/>
            <person name="Schobel S."/>
            <person name="Town C.D."/>
        </authorList>
    </citation>
    <scope>GENOME REANNOTATION</scope>
    <source>
        <strain>cv. Columbia</strain>
    </source>
</reference>
<reference key="4">
    <citation type="journal article" date="2003" name="Science">
        <title>Empirical analysis of transcriptional activity in the Arabidopsis genome.</title>
        <authorList>
            <person name="Yamada K."/>
            <person name="Lim J."/>
            <person name="Dale J.M."/>
            <person name="Chen H."/>
            <person name="Shinn P."/>
            <person name="Palm C.J."/>
            <person name="Southwick A.M."/>
            <person name="Wu H.C."/>
            <person name="Kim C.J."/>
            <person name="Nguyen M."/>
            <person name="Pham P.K."/>
            <person name="Cheuk R.F."/>
            <person name="Karlin-Newmann G."/>
            <person name="Liu S.X."/>
            <person name="Lam B."/>
            <person name="Sakano H."/>
            <person name="Wu T."/>
            <person name="Yu G."/>
            <person name="Miranda M."/>
            <person name="Quach H.L."/>
            <person name="Tripp M."/>
            <person name="Chang C.H."/>
            <person name="Lee J.M."/>
            <person name="Toriumi M.J."/>
            <person name="Chan M.M."/>
            <person name="Tang C.C."/>
            <person name="Onodera C.S."/>
            <person name="Deng J.M."/>
            <person name="Akiyama K."/>
            <person name="Ansari Y."/>
            <person name="Arakawa T."/>
            <person name="Banh J."/>
            <person name="Banno F."/>
            <person name="Bowser L."/>
            <person name="Brooks S.Y."/>
            <person name="Carninci P."/>
            <person name="Chao Q."/>
            <person name="Choy N."/>
            <person name="Enju A."/>
            <person name="Goldsmith A.D."/>
            <person name="Gurjal M."/>
            <person name="Hansen N.F."/>
            <person name="Hayashizaki Y."/>
            <person name="Johnson-Hopson C."/>
            <person name="Hsuan V.W."/>
            <person name="Iida K."/>
            <person name="Karnes M."/>
            <person name="Khan S."/>
            <person name="Koesema E."/>
            <person name="Ishida J."/>
            <person name="Jiang P.X."/>
            <person name="Jones T."/>
            <person name="Kawai J."/>
            <person name="Kamiya A."/>
            <person name="Meyers C."/>
            <person name="Nakajima M."/>
            <person name="Narusaka M."/>
            <person name="Seki M."/>
            <person name="Sakurai T."/>
            <person name="Satou M."/>
            <person name="Tamse R."/>
            <person name="Vaysberg M."/>
            <person name="Wallender E.K."/>
            <person name="Wong C."/>
            <person name="Yamamura Y."/>
            <person name="Yuan S."/>
            <person name="Shinozaki K."/>
            <person name="Davis R.W."/>
            <person name="Theologis A."/>
            <person name="Ecker J.R."/>
        </authorList>
    </citation>
    <scope>NUCLEOTIDE SEQUENCE [LARGE SCALE MRNA]</scope>
    <source>
        <strain>cv. Columbia</strain>
    </source>
</reference>
<reference key="5">
    <citation type="journal article" date="2000" name="Plant Cell Physiol.">
        <title>Genes encoding pseudo-response regulators: insight into His-to-Asp phosphorelay and circadian rhythm in Arabidopsis thaliana.</title>
        <authorList>
            <person name="Makino S."/>
            <person name="Kiba T."/>
            <person name="Imamura A."/>
            <person name="Hanaki N."/>
            <person name="Nakamura A."/>
            <person name="Suzuki T."/>
            <person name="Taniguchi M."/>
            <person name="Ueguchi C."/>
            <person name="Sugiyama T."/>
            <person name="Mizuno T."/>
        </authorList>
    </citation>
    <scope>GENE FAMILY</scope>
</reference>
<reference key="6">
    <citation type="journal article" date="2003" name="Plant Cell">
        <title>Arabidopsis PSEUDO-RESPONSE REGULATOR 7 is a signaling intermediate in phytochrome-regulated seedling deetiolation and phasing of the circadian clock.</title>
        <authorList>
            <person name="Kaczorowski K.A."/>
            <person name="Quail P.H."/>
        </authorList>
    </citation>
    <scope>FUNCTION</scope>
    <scope>SUBCELLULAR LOCATION</scope>
</reference>
<reference key="7">
    <citation type="journal article" date="2008" name="J. Biol. Chem.">
        <title>Post-translational regulation of the Arabidopsis circadian clock through selective proteolysis and phosphorylation of pseudo-response regulator proteins.</title>
        <authorList>
            <person name="Fujiwara S."/>
            <person name="Wang L."/>
            <person name="Han L."/>
            <person name="Suh S.-S."/>
            <person name="Salome P.A."/>
            <person name="McClung C.R."/>
            <person name="Somers D.E."/>
        </authorList>
    </citation>
    <scope>PHOSPHORYLATION</scope>
</reference>
<reference key="8">
    <citation type="journal article" date="2010" name="Plant Cell">
        <title>PSEUDO-RESPONSE REGULATORS 9, 7, and 5 are transcriptional repressors in the Arabidopsis circadian clock.</title>
        <authorList>
            <person name="Nakamichi N."/>
            <person name="Kiba T."/>
            <person name="Henriques R."/>
            <person name="Mizuno T."/>
            <person name="Chua N.H."/>
            <person name="Sakakibara H."/>
        </authorList>
    </citation>
    <scope>FUNCTION</scope>
</reference>
<reference key="9">
    <citation type="journal article" date="2010" name="Plant Cell">
        <title>The role of the Arabidopsis morning loop components CCA1, LHY, PRR7, and PRR9 in temperature compensation.</title>
        <authorList>
            <person name="Salome P.A."/>
            <person name="Weigel D."/>
            <person name="McClung C.R."/>
        </authorList>
    </citation>
    <scope>FUNCTION</scope>
</reference>
<reference key="10">
    <citation type="journal article" date="2011" name="Plant Cell">
        <title>LIGHT-REGULATED WD1 and PSEUDO-RESPONSE REGULATOR9 form a positive feedback regulatory loop in the Arabidopsis circadian clock.</title>
        <authorList>
            <person name="Wang Y."/>
            <person name="Wu J.F."/>
            <person name="Nakamichi N."/>
            <person name="Sakakibara H."/>
            <person name="Nam H.G."/>
            <person name="Wu S.H."/>
        </authorList>
    </citation>
    <scope>FUNCTION</scope>
</reference>
<reference key="11">
    <citation type="journal article" date="2012" name="Plant Cell">
        <title>SKIP is a component of the spliceosome linking alternative splicing and the circadian clock in Arabidopsis.</title>
        <authorList>
            <person name="Wang X."/>
            <person name="Wu F."/>
            <person name="Xie Q."/>
            <person name="Wang H."/>
            <person name="Wang Y."/>
            <person name="Yue Y."/>
            <person name="Gahura O."/>
            <person name="Ma S."/>
            <person name="Liu L."/>
            <person name="Cao Y."/>
            <person name="Jiao Y."/>
            <person name="Puta F."/>
            <person name="McClung C.R."/>
            <person name="Xu X."/>
            <person name="Ma L."/>
        </authorList>
    </citation>
    <scope>REGULATION</scope>
</reference>
<reference key="12">
    <citation type="journal article" date="2012" name="Proc. Natl. Acad. Sci. U.S.A.">
        <title>Transcriptional repressor PRR5 directly regulates clock-output pathways.</title>
        <authorList>
            <person name="Nakamichi N."/>
            <person name="Kiba T."/>
            <person name="Kamioka M."/>
            <person name="Suzuki T."/>
            <person name="Yamashino T."/>
            <person name="Higashiyama T."/>
            <person name="Sakakibara H."/>
            <person name="Mizuno T."/>
        </authorList>
    </citation>
    <scope>FUNCTION</scope>
</reference>
<reference key="13">
    <citation type="journal article" date="2013" name="Plant Cell">
        <title>Heat shock-induced fluctuations in clock and light signaling enhance phytochrome B-mediated Arabidopsis deetiolation.</title>
        <authorList>
            <person name="Karayekov E."/>
            <person name="Sellaro R."/>
            <person name="Legris M."/>
            <person name="Yanovsky M.J."/>
            <person name="Casal J.J."/>
        </authorList>
    </citation>
    <scope>INDUCTION BY HEAT-SHOCK</scope>
</reference>
<reference key="14">
    <citation type="journal article" date="2013" name="Plant J.">
        <title>Direct regulation of abiotic responses by the Arabidopsis circadian clock component PRR7.</title>
        <authorList>
            <person name="Liu T."/>
            <person name="Carlsson J."/>
            <person name="Takeuchi T."/>
            <person name="Newton L."/>
            <person name="Farre E.M."/>
        </authorList>
    </citation>
    <scope>FUNCTION</scope>
</reference>
<reference key="15">
    <citation type="journal article" date="2013" name="Nature">
        <title>Photosynthetic entrainment of the Arabidopsis thaliana circadian clock.</title>
        <authorList>
            <person name="Haydon M.J."/>
            <person name="Mielczarek O."/>
            <person name="Robertson F.C."/>
            <person name="Hubbard K.E."/>
            <person name="Webb A.A."/>
        </authorList>
    </citation>
    <scope>FUNCTION</scope>
    <scope>DISRUPTION PHENOTYPE</scope>
    <scope>INDUCTION BY LIGHT AND SUCROSE</scope>
</reference>
<dbReference type="EMBL" id="AB046954">
    <property type="protein sequence ID" value="BAB13742.1"/>
    <property type="molecule type" value="mRNA"/>
</dbReference>
<dbReference type="EMBL" id="AL162973">
    <property type="protein sequence ID" value="CAB86035.1"/>
    <property type="status" value="ALT_SEQ"/>
    <property type="molecule type" value="Genomic_DNA"/>
</dbReference>
<dbReference type="EMBL" id="CP002688">
    <property type="protein sequence ID" value="AED90520.1"/>
    <property type="molecule type" value="Genomic_DNA"/>
</dbReference>
<dbReference type="EMBL" id="AY039943">
    <property type="protein sequence ID" value="AAK64047.1"/>
    <property type="molecule type" value="mRNA"/>
</dbReference>
<dbReference type="EMBL" id="AY142560">
    <property type="protein sequence ID" value="AAN13129.1"/>
    <property type="molecule type" value="mRNA"/>
</dbReference>
<dbReference type="PIR" id="T48302">
    <property type="entry name" value="T48302"/>
</dbReference>
<dbReference type="RefSeq" id="NP_568107.1">
    <property type="nucleotide sequence ID" value="NM_120359.3"/>
</dbReference>
<dbReference type="SMR" id="Q93WK5"/>
<dbReference type="BioGRID" id="17069">
    <property type="interactions" value="11"/>
</dbReference>
<dbReference type="FunCoup" id="Q93WK5">
    <property type="interactions" value="77"/>
</dbReference>
<dbReference type="IntAct" id="Q93WK5">
    <property type="interactions" value="2"/>
</dbReference>
<dbReference type="STRING" id="3702.Q93WK5"/>
<dbReference type="iPTMnet" id="Q93WK5"/>
<dbReference type="PaxDb" id="3702-AT5G02810.1"/>
<dbReference type="ProteomicsDB" id="244462"/>
<dbReference type="EnsemblPlants" id="AT5G02810.1">
    <property type="protein sequence ID" value="AT5G02810.1"/>
    <property type="gene ID" value="AT5G02810"/>
</dbReference>
<dbReference type="GeneID" id="831793"/>
<dbReference type="Gramene" id="AT5G02810.1">
    <property type="protein sequence ID" value="AT5G02810.1"/>
    <property type="gene ID" value="AT5G02810"/>
</dbReference>
<dbReference type="KEGG" id="ath:AT5G02810"/>
<dbReference type="Araport" id="AT5G02810"/>
<dbReference type="TAIR" id="AT5G02810">
    <property type="gene designation" value="PRR7"/>
</dbReference>
<dbReference type="eggNOG" id="KOG1601">
    <property type="taxonomic scope" value="Eukaryota"/>
</dbReference>
<dbReference type="HOGENOM" id="CLU_015512_1_0_1"/>
<dbReference type="InParanoid" id="Q93WK5"/>
<dbReference type="OMA" id="PPNQCSN"/>
<dbReference type="OrthoDB" id="60033at2759"/>
<dbReference type="PhylomeDB" id="Q93WK5"/>
<dbReference type="PRO" id="PR:Q93WK5"/>
<dbReference type="Proteomes" id="UP000006548">
    <property type="component" value="Chromosome 5"/>
</dbReference>
<dbReference type="ExpressionAtlas" id="Q93WK5">
    <property type="expression patterns" value="baseline and differential"/>
</dbReference>
<dbReference type="GO" id="GO:0005739">
    <property type="term" value="C:mitochondrion"/>
    <property type="evidence" value="ECO:0007005"/>
    <property type="project" value="TAIR"/>
</dbReference>
<dbReference type="GO" id="GO:0005634">
    <property type="term" value="C:nucleus"/>
    <property type="evidence" value="ECO:0000314"/>
    <property type="project" value="TAIR"/>
</dbReference>
<dbReference type="GO" id="GO:0003677">
    <property type="term" value="F:DNA binding"/>
    <property type="evidence" value="ECO:0000353"/>
    <property type="project" value="TAIR"/>
</dbReference>
<dbReference type="GO" id="GO:0007623">
    <property type="term" value="P:circadian rhythm"/>
    <property type="evidence" value="ECO:0000315"/>
    <property type="project" value="TAIR"/>
</dbReference>
<dbReference type="GO" id="GO:0009736">
    <property type="term" value="P:cytokinin-activated signaling pathway"/>
    <property type="evidence" value="ECO:0007669"/>
    <property type="project" value="InterPro"/>
</dbReference>
<dbReference type="GO" id="GO:0045892">
    <property type="term" value="P:negative regulation of DNA-templated transcription"/>
    <property type="evidence" value="ECO:0000314"/>
    <property type="project" value="TAIR"/>
</dbReference>
<dbReference type="GO" id="GO:0000160">
    <property type="term" value="P:phosphorelay signal transduction system"/>
    <property type="evidence" value="ECO:0007669"/>
    <property type="project" value="UniProtKB-KW"/>
</dbReference>
<dbReference type="GO" id="GO:0010017">
    <property type="term" value="P:red or far-red light signaling pathway"/>
    <property type="evidence" value="ECO:0000315"/>
    <property type="project" value="TAIR"/>
</dbReference>
<dbReference type="GO" id="GO:0006355">
    <property type="term" value="P:regulation of DNA-templated transcription"/>
    <property type="evidence" value="ECO:0000304"/>
    <property type="project" value="TAIR"/>
</dbReference>
<dbReference type="CDD" id="cd17582">
    <property type="entry name" value="psREC_PRR"/>
    <property type="match status" value="1"/>
</dbReference>
<dbReference type="FunFam" id="3.40.50.2300:FF:000214">
    <property type="entry name" value="Two-component response regulator-like PRR37"/>
    <property type="match status" value="1"/>
</dbReference>
<dbReference type="Gene3D" id="3.40.50.2300">
    <property type="match status" value="1"/>
</dbReference>
<dbReference type="InterPro" id="IPR045279">
    <property type="entry name" value="ARR-like"/>
</dbReference>
<dbReference type="InterPro" id="IPR010402">
    <property type="entry name" value="CCT_domain"/>
</dbReference>
<dbReference type="InterPro" id="IPR011006">
    <property type="entry name" value="CheY-like_superfamily"/>
</dbReference>
<dbReference type="InterPro" id="IPR001789">
    <property type="entry name" value="Sig_transdc_resp-reg_receiver"/>
</dbReference>
<dbReference type="PANTHER" id="PTHR43874">
    <property type="entry name" value="TWO-COMPONENT RESPONSE REGULATOR"/>
    <property type="match status" value="1"/>
</dbReference>
<dbReference type="PANTHER" id="PTHR43874:SF125">
    <property type="entry name" value="TWO-COMPONENT RESPONSE REGULATOR-LIKE APRR7"/>
    <property type="match status" value="1"/>
</dbReference>
<dbReference type="Pfam" id="PF06203">
    <property type="entry name" value="CCT"/>
    <property type="match status" value="1"/>
</dbReference>
<dbReference type="Pfam" id="PF00072">
    <property type="entry name" value="Response_reg"/>
    <property type="match status" value="1"/>
</dbReference>
<dbReference type="SMART" id="SM00448">
    <property type="entry name" value="REC"/>
    <property type="match status" value="1"/>
</dbReference>
<dbReference type="SUPFAM" id="SSF52172">
    <property type="entry name" value="CheY-like"/>
    <property type="match status" value="1"/>
</dbReference>
<dbReference type="PROSITE" id="PS51017">
    <property type="entry name" value="CCT"/>
    <property type="match status" value="1"/>
</dbReference>
<dbReference type="PROSITE" id="PS50110">
    <property type="entry name" value="RESPONSE_REGULATORY"/>
    <property type="match status" value="1"/>
</dbReference>
<accession>Q93WK5</accession>
<accession>Q9LZ04</accession>
<name>APRR7_ARATH</name>
<feature type="chain" id="PRO_0000081439" description="Two-component response regulator-like APRR7">
    <location>
        <begin position="1"/>
        <end position="727"/>
    </location>
</feature>
<feature type="domain" description="Response regulatory" evidence="1">
    <location>
        <begin position="79"/>
        <end position="197"/>
    </location>
</feature>
<feature type="domain" description="CCT" evidence="2">
    <location>
        <begin position="669"/>
        <end position="711"/>
    </location>
</feature>
<feature type="region of interest" description="Disordered" evidence="3">
    <location>
        <begin position="1"/>
        <end position="47"/>
    </location>
</feature>
<feature type="region of interest" description="Disordered" evidence="3">
    <location>
        <begin position="203"/>
        <end position="265"/>
    </location>
</feature>
<feature type="region of interest" description="Disordered" evidence="3">
    <location>
        <begin position="291"/>
        <end position="312"/>
    </location>
</feature>
<feature type="region of interest" description="Disordered" evidence="3">
    <location>
        <begin position="339"/>
        <end position="416"/>
    </location>
</feature>
<feature type="region of interest" description="Disordered" evidence="3">
    <location>
        <begin position="464"/>
        <end position="487"/>
    </location>
</feature>
<feature type="region of interest" description="Disordered" evidence="3">
    <location>
        <begin position="509"/>
        <end position="560"/>
    </location>
</feature>
<feature type="region of interest" description="Disordered" evidence="3">
    <location>
        <begin position="606"/>
        <end position="670"/>
    </location>
</feature>
<feature type="compositionally biased region" description="Basic and acidic residues" evidence="3">
    <location>
        <begin position="14"/>
        <end position="40"/>
    </location>
</feature>
<feature type="compositionally biased region" description="Low complexity" evidence="3">
    <location>
        <begin position="246"/>
        <end position="259"/>
    </location>
</feature>
<feature type="compositionally biased region" description="Polar residues" evidence="3">
    <location>
        <begin position="344"/>
        <end position="353"/>
    </location>
</feature>
<feature type="compositionally biased region" description="Polar residues" evidence="3">
    <location>
        <begin position="467"/>
        <end position="487"/>
    </location>
</feature>
<feature type="compositionally biased region" description="Polar residues" evidence="3">
    <location>
        <begin position="519"/>
        <end position="535"/>
    </location>
</feature>
<feature type="compositionally biased region" description="Low complexity" evidence="3">
    <location>
        <begin position="538"/>
        <end position="555"/>
    </location>
</feature>
<feature type="compositionally biased region" description="Gly residues" evidence="3">
    <location>
        <begin position="641"/>
        <end position="657"/>
    </location>
</feature>
<comment type="function">
    <text evidence="4 5 7 8 9 10 11 13">Transcriptional repressor of CCA1 and LHY, and positive regulator of LWD1 and LWD2 expression. Represses the expression of other clock proteins and master regulators of plant growth, development and response to abiotic stress. Involved in the positive and negative feedback loops of the circadian clock. Controls photoperiodic flowering response and temperature compensation. Expression of several members of the ARR-like family is controlled by circadian rhythm. APRR9, APRR7, and APRR5 coordinately act on the upstream region of the target genes to repress their expression from noon until midnight. The particular coordinated sequential expression of APRR9, APRR7, APRR5, APRR3 and APPR1 result to circadian waves that may be at the basis of the endogenous circadian clock.</text>
</comment>
<comment type="interaction">
    <interactant intactId="EBI-25528701">
        <id>Q93WK5</id>
    </interactant>
    <interactant intactId="EBI-2429535">
        <id>Q9FGM1</id>
        <label>PYL8</label>
    </interactant>
    <organismsDiffer>false</organismsDiffer>
    <experiments>3</experiments>
</comment>
<comment type="subcellular location">
    <subcellularLocation>
        <location evidence="2 5">Nucleus</location>
    </subcellularLocation>
</comment>
<comment type="induction">
    <text evidence="12 13">Up-regulated by heat-shock and light at dawn, and down-regulated by the sugars produced by photosynthesis.</text>
</comment>
<comment type="PTM">
    <text evidence="6">Phosphorylated. Phosphorylation varies throughout the diurnal cycle.</text>
</comment>
<comment type="disruption phenotype">
    <text evidence="13">Insensitive to the effect of sucrose on the circadian period.</text>
</comment>
<comment type="miscellaneous">
    <text evidence="15 16">Regulated at the level of mRNA maturation and alternative splicing by SKIP (PubMed:22942380). The expression of APRR9, APRR7, and APRR5 requires the presence of LWD1 and/or LWD2, indicating the existence of a positive feedback loop within the circadian clock (PubMed:21357491).</text>
</comment>
<comment type="similarity">
    <text evidence="14">Belongs to the ARR-like family.</text>
</comment>
<comment type="caution">
    <text evidence="14">Lacks the phospho-accepting Asp (here Glu-130), present in the receiver domain, which is one of the conserved features of two-component response regulators (ARRs) family.</text>
</comment>
<comment type="sequence caution" evidence="14">
    <conflict type="erroneous gene model prediction">
        <sequence resource="EMBL-CDS" id="CAB86035"/>
    </conflict>
</comment>
<keyword id="KW-0090">Biological rhythms</keyword>
<keyword id="KW-0539">Nucleus</keyword>
<keyword id="KW-0597">Phosphoprotein</keyword>
<keyword id="KW-1185">Reference proteome</keyword>
<keyword id="KW-0804">Transcription</keyword>
<keyword id="KW-0805">Transcription regulation</keyword>
<keyword id="KW-0902">Two-component regulatory system</keyword>
<proteinExistence type="evidence at protein level"/>
<sequence>MNANEEGEGSRYPITDRKTGETKFDRVESRTEKHSEEEKTNGITMDVRNGSSGGLQIPLSQQTAATVCWERFLHVRTIRVLLVENDDCTRYIVTALLRNCSYEVVEASNGIQAWKVLEDLNNHIDIVLTEVIMPYLSGIGLLCKILNHKSRRNIPVIMMSSHDSMGLVFKCLSKGAVDFLVKPIRKNELKILWQHVWRRCQSSSGSGSESGTHQTQKSVKSKSIKKSDQDSGSSDENENGSIGLNASDGSSDGSGAQSSWTKKAVDVDDSPRAVSLWDRVDSTCAQVVHSNPEFPSNQLVAPPAEKETQEHDDKFEDVTMGRDLEISIRRNCDLALEPKDEPLSKTTGIMRQDNSFEKSSSKWKMKVGKGPLDLSSESPSSKQMHEDGGSSFKAMSSHLQDNREPEAPNTHLKTLDTNEASVKISEELMHVEHSSKRHRGTKDDGTLVRDDRNVLRRSEGSAFSRYNPASNANKISGGNLGSTSLQDNNSQDLIKKTEAAYDCHSNMNESLPHNHRSHVGSNNFDMSSTTENNAFTKPGAPKVSSAGSSSVKHSSFQPLPCDHHNNHASYNLVHVAERKKLPPQCGSSNVYNETIEGNNNTVNYSVNGSVSGSGHGSNGPYGSSNGMNAGGMNMGSDNGAGKNGNGDGSGSGSGSGSGNLADENKISQREAALTKFRQKRKERCFRKKVRYQSRKKLAEQRPRVRGQFVRKTAAATDDNDIKNIEDS</sequence>